<proteinExistence type="inferred from homology"/>
<reference key="1">
    <citation type="journal article" date="2011" name="Stand. Genomic Sci.">
        <title>Complete genome sequence of the halophilic and highly halotolerant Chromohalobacter salexigens type strain (1H11(T)).</title>
        <authorList>
            <person name="Copeland A."/>
            <person name="O'Connor K."/>
            <person name="Lucas S."/>
            <person name="Lapidus A."/>
            <person name="Berry K.W."/>
            <person name="Detter J.C."/>
            <person name="Del Rio T.G."/>
            <person name="Hammon N."/>
            <person name="Dalin E."/>
            <person name="Tice H."/>
            <person name="Pitluck S."/>
            <person name="Bruce D."/>
            <person name="Goodwin L."/>
            <person name="Han C."/>
            <person name="Tapia R."/>
            <person name="Saunders E."/>
            <person name="Schmutz J."/>
            <person name="Brettin T."/>
            <person name="Larimer F."/>
            <person name="Land M."/>
            <person name="Hauser L."/>
            <person name="Vargas C."/>
            <person name="Nieto J.J."/>
            <person name="Kyrpides N.C."/>
            <person name="Ivanova N."/>
            <person name="Goker M."/>
            <person name="Klenk H.P."/>
            <person name="Csonka L.N."/>
            <person name="Woyke T."/>
        </authorList>
    </citation>
    <scope>NUCLEOTIDE SEQUENCE [LARGE SCALE GENOMIC DNA]</scope>
    <source>
        <strain>ATCC BAA-138 / DSM 3043 / CIP 106854 / NCIMB 13768 / 1H11</strain>
    </source>
</reference>
<sequence>MAREDHIEMEGVVVDTLPNTMFRVELENGHVVTAHISGKMRKNYIRILTGDKVKVELTPYDLSKGRIVYRAR</sequence>
<comment type="function">
    <text evidence="1">One of the essential components for the initiation of protein synthesis. Stabilizes the binding of IF-2 and IF-3 on the 30S subunit to which N-formylmethionyl-tRNA(fMet) subsequently binds. Helps modulate mRNA selection, yielding the 30S pre-initiation complex (PIC). Upon addition of the 50S ribosomal subunit IF-1, IF-2 and IF-3 are released leaving the mature 70S translation initiation complex.</text>
</comment>
<comment type="subunit">
    <text evidence="1">Component of the 30S ribosomal translation pre-initiation complex which assembles on the 30S ribosome in the order IF-2 and IF-3, IF-1 and N-formylmethionyl-tRNA(fMet); mRNA recruitment can occur at any time during PIC assembly.</text>
</comment>
<comment type="subcellular location">
    <subcellularLocation>
        <location evidence="1">Cytoplasm</location>
    </subcellularLocation>
</comment>
<comment type="similarity">
    <text evidence="1">Belongs to the IF-1 family.</text>
</comment>
<feature type="chain" id="PRO_0000263784" description="Translation initiation factor IF-1">
    <location>
        <begin position="1"/>
        <end position="72"/>
    </location>
</feature>
<feature type="domain" description="S1-like" evidence="1">
    <location>
        <begin position="1"/>
        <end position="72"/>
    </location>
</feature>
<accession>Q1QUS2</accession>
<protein>
    <recommendedName>
        <fullName evidence="1">Translation initiation factor IF-1</fullName>
    </recommendedName>
</protein>
<dbReference type="EMBL" id="CP000285">
    <property type="protein sequence ID" value="ABE59786.1"/>
    <property type="molecule type" value="Genomic_DNA"/>
</dbReference>
<dbReference type="RefSeq" id="WP_011507732.1">
    <property type="nucleotide sequence ID" value="NC_007963.1"/>
</dbReference>
<dbReference type="SMR" id="Q1QUS2"/>
<dbReference type="STRING" id="290398.Csal_2439"/>
<dbReference type="GeneID" id="95335145"/>
<dbReference type="KEGG" id="csa:Csal_2439"/>
<dbReference type="eggNOG" id="COG0361">
    <property type="taxonomic scope" value="Bacteria"/>
</dbReference>
<dbReference type="HOGENOM" id="CLU_151267_1_0_6"/>
<dbReference type="OrthoDB" id="9803250at2"/>
<dbReference type="Proteomes" id="UP000000239">
    <property type="component" value="Chromosome"/>
</dbReference>
<dbReference type="GO" id="GO:0005829">
    <property type="term" value="C:cytosol"/>
    <property type="evidence" value="ECO:0007669"/>
    <property type="project" value="TreeGrafter"/>
</dbReference>
<dbReference type="GO" id="GO:0043022">
    <property type="term" value="F:ribosome binding"/>
    <property type="evidence" value="ECO:0007669"/>
    <property type="project" value="UniProtKB-UniRule"/>
</dbReference>
<dbReference type="GO" id="GO:0019843">
    <property type="term" value="F:rRNA binding"/>
    <property type="evidence" value="ECO:0007669"/>
    <property type="project" value="UniProtKB-UniRule"/>
</dbReference>
<dbReference type="GO" id="GO:0003743">
    <property type="term" value="F:translation initiation factor activity"/>
    <property type="evidence" value="ECO:0007669"/>
    <property type="project" value="UniProtKB-UniRule"/>
</dbReference>
<dbReference type="CDD" id="cd04451">
    <property type="entry name" value="S1_IF1"/>
    <property type="match status" value="1"/>
</dbReference>
<dbReference type="FunFam" id="2.40.50.140:FF:000002">
    <property type="entry name" value="Translation initiation factor IF-1"/>
    <property type="match status" value="1"/>
</dbReference>
<dbReference type="Gene3D" id="2.40.50.140">
    <property type="entry name" value="Nucleic acid-binding proteins"/>
    <property type="match status" value="1"/>
</dbReference>
<dbReference type="HAMAP" id="MF_00075">
    <property type="entry name" value="IF_1"/>
    <property type="match status" value="1"/>
</dbReference>
<dbReference type="InterPro" id="IPR012340">
    <property type="entry name" value="NA-bd_OB-fold"/>
</dbReference>
<dbReference type="InterPro" id="IPR006196">
    <property type="entry name" value="RNA-binding_domain_S1_IF1"/>
</dbReference>
<dbReference type="InterPro" id="IPR003029">
    <property type="entry name" value="S1_domain"/>
</dbReference>
<dbReference type="InterPro" id="IPR004368">
    <property type="entry name" value="TIF_IF1"/>
</dbReference>
<dbReference type="NCBIfam" id="TIGR00008">
    <property type="entry name" value="infA"/>
    <property type="match status" value="1"/>
</dbReference>
<dbReference type="PANTHER" id="PTHR33370">
    <property type="entry name" value="TRANSLATION INITIATION FACTOR IF-1, CHLOROPLASTIC"/>
    <property type="match status" value="1"/>
</dbReference>
<dbReference type="PANTHER" id="PTHR33370:SF1">
    <property type="entry name" value="TRANSLATION INITIATION FACTOR IF-1, CHLOROPLASTIC"/>
    <property type="match status" value="1"/>
</dbReference>
<dbReference type="Pfam" id="PF01176">
    <property type="entry name" value="eIF-1a"/>
    <property type="match status" value="1"/>
</dbReference>
<dbReference type="SMART" id="SM00316">
    <property type="entry name" value="S1"/>
    <property type="match status" value="1"/>
</dbReference>
<dbReference type="SUPFAM" id="SSF50249">
    <property type="entry name" value="Nucleic acid-binding proteins"/>
    <property type="match status" value="1"/>
</dbReference>
<dbReference type="PROSITE" id="PS50832">
    <property type="entry name" value="S1_IF1_TYPE"/>
    <property type="match status" value="1"/>
</dbReference>
<keyword id="KW-0963">Cytoplasm</keyword>
<keyword id="KW-0396">Initiation factor</keyword>
<keyword id="KW-0648">Protein biosynthesis</keyword>
<keyword id="KW-1185">Reference proteome</keyword>
<keyword id="KW-0694">RNA-binding</keyword>
<keyword id="KW-0699">rRNA-binding</keyword>
<gene>
    <name evidence="1" type="primary">infA</name>
    <name type="ordered locus">Csal_2439</name>
</gene>
<evidence type="ECO:0000255" key="1">
    <source>
        <dbReference type="HAMAP-Rule" id="MF_00075"/>
    </source>
</evidence>
<name>IF1_CHRSD</name>
<organism>
    <name type="scientific">Chromohalobacter salexigens (strain ATCC BAA-138 / DSM 3043 / CIP 106854 / NCIMB 13768 / 1H11)</name>
    <dbReference type="NCBI Taxonomy" id="290398"/>
    <lineage>
        <taxon>Bacteria</taxon>
        <taxon>Pseudomonadati</taxon>
        <taxon>Pseudomonadota</taxon>
        <taxon>Gammaproteobacteria</taxon>
        <taxon>Oceanospirillales</taxon>
        <taxon>Halomonadaceae</taxon>
        <taxon>Chromohalobacter</taxon>
    </lineage>
</organism>